<feature type="chain" id="PRO_1000091004" description="Aspartate--tRNA ligase">
    <location>
        <begin position="1"/>
        <end position="601"/>
    </location>
</feature>
<feature type="region of interest" description="Aspartate" evidence="1">
    <location>
        <begin position="200"/>
        <end position="203"/>
    </location>
</feature>
<feature type="binding site" evidence="1">
    <location>
        <position position="176"/>
    </location>
    <ligand>
        <name>L-aspartate</name>
        <dbReference type="ChEBI" id="CHEBI:29991"/>
    </ligand>
</feature>
<feature type="binding site" evidence="1">
    <location>
        <begin position="222"/>
        <end position="224"/>
    </location>
    <ligand>
        <name>ATP</name>
        <dbReference type="ChEBI" id="CHEBI:30616"/>
    </ligand>
</feature>
<feature type="binding site" evidence="1">
    <location>
        <position position="222"/>
    </location>
    <ligand>
        <name>L-aspartate</name>
        <dbReference type="ChEBI" id="CHEBI:29991"/>
    </ligand>
</feature>
<feature type="binding site" evidence="1">
    <location>
        <position position="231"/>
    </location>
    <ligand>
        <name>ATP</name>
        <dbReference type="ChEBI" id="CHEBI:30616"/>
    </ligand>
</feature>
<feature type="binding site" evidence="1">
    <location>
        <position position="448"/>
    </location>
    <ligand>
        <name>L-aspartate</name>
        <dbReference type="ChEBI" id="CHEBI:29991"/>
    </ligand>
</feature>
<feature type="binding site" evidence="1">
    <location>
        <position position="482"/>
    </location>
    <ligand>
        <name>ATP</name>
        <dbReference type="ChEBI" id="CHEBI:30616"/>
    </ligand>
</feature>
<feature type="binding site" evidence="1">
    <location>
        <position position="489"/>
    </location>
    <ligand>
        <name>L-aspartate</name>
        <dbReference type="ChEBI" id="CHEBI:29991"/>
    </ligand>
</feature>
<feature type="binding site" evidence="1">
    <location>
        <begin position="534"/>
        <end position="537"/>
    </location>
    <ligand>
        <name>ATP</name>
        <dbReference type="ChEBI" id="CHEBI:30616"/>
    </ligand>
</feature>
<accession>B3WEM2</accession>
<keyword id="KW-0030">Aminoacyl-tRNA synthetase</keyword>
<keyword id="KW-0067">ATP-binding</keyword>
<keyword id="KW-0963">Cytoplasm</keyword>
<keyword id="KW-0436">Ligase</keyword>
<keyword id="KW-0547">Nucleotide-binding</keyword>
<keyword id="KW-0648">Protein biosynthesis</keyword>
<proteinExistence type="inferred from homology"/>
<dbReference type="EC" id="6.1.1.12" evidence="1"/>
<dbReference type="EMBL" id="FM177140">
    <property type="protein sequence ID" value="CAQ66823.1"/>
    <property type="molecule type" value="Genomic_DNA"/>
</dbReference>
<dbReference type="SMR" id="B3WEM2"/>
<dbReference type="KEGG" id="lcb:LCABL_17420"/>
<dbReference type="HOGENOM" id="CLU_014330_3_2_9"/>
<dbReference type="GO" id="GO:0005737">
    <property type="term" value="C:cytoplasm"/>
    <property type="evidence" value="ECO:0007669"/>
    <property type="project" value="UniProtKB-SubCell"/>
</dbReference>
<dbReference type="GO" id="GO:0004815">
    <property type="term" value="F:aspartate-tRNA ligase activity"/>
    <property type="evidence" value="ECO:0007669"/>
    <property type="project" value="UniProtKB-UniRule"/>
</dbReference>
<dbReference type="GO" id="GO:0005524">
    <property type="term" value="F:ATP binding"/>
    <property type="evidence" value="ECO:0007669"/>
    <property type="project" value="UniProtKB-UniRule"/>
</dbReference>
<dbReference type="GO" id="GO:0140096">
    <property type="term" value="F:catalytic activity, acting on a protein"/>
    <property type="evidence" value="ECO:0007669"/>
    <property type="project" value="UniProtKB-ARBA"/>
</dbReference>
<dbReference type="GO" id="GO:0003676">
    <property type="term" value="F:nucleic acid binding"/>
    <property type="evidence" value="ECO:0007669"/>
    <property type="project" value="InterPro"/>
</dbReference>
<dbReference type="GO" id="GO:0016740">
    <property type="term" value="F:transferase activity"/>
    <property type="evidence" value="ECO:0007669"/>
    <property type="project" value="UniProtKB-ARBA"/>
</dbReference>
<dbReference type="GO" id="GO:0006422">
    <property type="term" value="P:aspartyl-tRNA aminoacylation"/>
    <property type="evidence" value="ECO:0007669"/>
    <property type="project" value="UniProtKB-UniRule"/>
</dbReference>
<dbReference type="CDD" id="cd00777">
    <property type="entry name" value="AspRS_core"/>
    <property type="match status" value="1"/>
</dbReference>
<dbReference type="CDD" id="cd04317">
    <property type="entry name" value="EcAspRS_like_N"/>
    <property type="match status" value="1"/>
</dbReference>
<dbReference type="Gene3D" id="3.30.930.10">
    <property type="entry name" value="Bira Bifunctional Protein, Domain 2"/>
    <property type="match status" value="1"/>
</dbReference>
<dbReference type="Gene3D" id="3.30.1360.30">
    <property type="entry name" value="GAD-like domain"/>
    <property type="match status" value="1"/>
</dbReference>
<dbReference type="Gene3D" id="2.40.50.140">
    <property type="entry name" value="Nucleic acid-binding proteins"/>
    <property type="match status" value="1"/>
</dbReference>
<dbReference type="HAMAP" id="MF_00044">
    <property type="entry name" value="Asp_tRNA_synth_type1"/>
    <property type="match status" value="1"/>
</dbReference>
<dbReference type="InterPro" id="IPR004364">
    <property type="entry name" value="Aa-tRNA-synt_II"/>
</dbReference>
<dbReference type="InterPro" id="IPR006195">
    <property type="entry name" value="aa-tRNA-synth_II"/>
</dbReference>
<dbReference type="InterPro" id="IPR045864">
    <property type="entry name" value="aa-tRNA-synth_II/BPL/LPL"/>
</dbReference>
<dbReference type="InterPro" id="IPR004524">
    <property type="entry name" value="Asp-tRNA-ligase_1"/>
</dbReference>
<dbReference type="InterPro" id="IPR047089">
    <property type="entry name" value="Asp-tRNA-ligase_1_N"/>
</dbReference>
<dbReference type="InterPro" id="IPR002312">
    <property type="entry name" value="Asp/Asn-tRNA-synth_IIb"/>
</dbReference>
<dbReference type="InterPro" id="IPR047090">
    <property type="entry name" value="AspRS_core"/>
</dbReference>
<dbReference type="InterPro" id="IPR004115">
    <property type="entry name" value="GAD-like_sf"/>
</dbReference>
<dbReference type="InterPro" id="IPR029351">
    <property type="entry name" value="GAD_dom"/>
</dbReference>
<dbReference type="InterPro" id="IPR012340">
    <property type="entry name" value="NA-bd_OB-fold"/>
</dbReference>
<dbReference type="InterPro" id="IPR004365">
    <property type="entry name" value="NA-bd_OB_tRNA"/>
</dbReference>
<dbReference type="NCBIfam" id="TIGR00459">
    <property type="entry name" value="aspS_bact"/>
    <property type="match status" value="1"/>
</dbReference>
<dbReference type="NCBIfam" id="NF001750">
    <property type="entry name" value="PRK00476.1"/>
    <property type="match status" value="1"/>
</dbReference>
<dbReference type="PANTHER" id="PTHR22594:SF5">
    <property type="entry name" value="ASPARTATE--TRNA LIGASE, MITOCHONDRIAL"/>
    <property type="match status" value="1"/>
</dbReference>
<dbReference type="PANTHER" id="PTHR22594">
    <property type="entry name" value="ASPARTYL/LYSYL-TRNA SYNTHETASE"/>
    <property type="match status" value="1"/>
</dbReference>
<dbReference type="Pfam" id="PF02938">
    <property type="entry name" value="GAD"/>
    <property type="match status" value="1"/>
</dbReference>
<dbReference type="Pfam" id="PF00152">
    <property type="entry name" value="tRNA-synt_2"/>
    <property type="match status" value="1"/>
</dbReference>
<dbReference type="Pfam" id="PF01336">
    <property type="entry name" value="tRNA_anti-codon"/>
    <property type="match status" value="1"/>
</dbReference>
<dbReference type="PRINTS" id="PR01042">
    <property type="entry name" value="TRNASYNTHASP"/>
</dbReference>
<dbReference type="SUPFAM" id="SSF55681">
    <property type="entry name" value="Class II aaRS and biotin synthetases"/>
    <property type="match status" value="1"/>
</dbReference>
<dbReference type="SUPFAM" id="SSF55261">
    <property type="entry name" value="GAD domain-like"/>
    <property type="match status" value="1"/>
</dbReference>
<dbReference type="SUPFAM" id="SSF50249">
    <property type="entry name" value="Nucleic acid-binding proteins"/>
    <property type="match status" value="1"/>
</dbReference>
<dbReference type="PROSITE" id="PS50862">
    <property type="entry name" value="AA_TRNA_LIGASE_II"/>
    <property type="match status" value="1"/>
</dbReference>
<gene>
    <name evidence="1" type="primary">aspS</name>
    <name type="ordered locus">LCABL_17420</name>
</gene>
<sequence length="601" mass="67554">MSKRTCYAGDVTAEYVDQEVTLKGWVQKRRSLGSLIFIDLRDREGIVQLVFSEEFDKDALAVANSVRSEYVIEVQGVVKKRKPQAVNKDMKTGDVEVEVHTITILNKAKTPPFYIEDGVAVTEETKLKYRYLDLRRPEMQKNIFTRAHIMRSVHHFLDDNGFIDVETPTLTASTPEGARDYLVPSRVYPGSFYALPQSPQLFKQLLMGAGFDRYYQIARCFRDEDLRGDRQPEFTQIDLETSFLTAEEIQDITEGLIAKVMHDVKGIDVKLPFDRITWQDAMDKYGSDKPDLRFDMQIQDVSELVKDSDFKVFAGAVQNGGQVRAIVLPGGADKYSRKMIDAQQDYIKRFGAKGLAWLKVTSDSISGPIAKFFGDGADLVKAVGANAGDLVLFVADKAKVVADALGYLRTHFGHDLGLIDEQAFRFCWVVDWPLFEYDEGIQRWVPAHHPFTMPNEEDVHLLDTDPHAAHAQSYDIVLNGYELGGGSIRIHNREIQGKMLKALGFTPERAQKSFGFLLNALDYGFPPHGGLAIGLDRFVMLLTGRDNIRDVIAFPKNSKASEPMTSAPYPVADAQLKDLGIEVRADVDPEKEHEGDENLTE</sequence>
<organism>
    <name type="scientific">Lacticaseibacillus casei (strain BL23)</name>
    <name type="common">Lactobacillus casei</name>
    <dbReference type="NCBI Taxonomy" id="543734"/>
    <lineage>
        <taxon>Bacteria</taxon>
        <taxon>Bacillati</taxon>
        <taxon>Bacillota</taxon>
        <taxon>Bacilli</taxon>
        <taxon>Lactobacillales</taxon>
        <taxon>Lactobacillaceae</taxon>
        <taxon>Lacticaseibacillus</taxon>
    </lineage>
</organism>
<name>SYD_LACCB</name>
<protein>
    <recommendedName>
        <fullName evidence="1">Aspartate--tRNA ligase</fullName>
        <ecNumber evidence="1">6.1.1.12</ecNumber>
    </recommendedName>
    <alternativeName>
        <fullName evidence="1">Aspartyl-tRNA synthetase</fullName>
        <shortName evidence="1">AspRS</shortName>
    </alternativeName>
</protein>
<evidence type="ECO:0000255" key="1">
    <source>
        <dbReference type="HAMAP-Rule" id="MF_00044"/>
    </source>
</evidence>
<reference key="1">
    <citation type="submission" date="2008-06" db="EMBL/GenBank/DDBJ databases">
        <title>Lactobacillus casei BL23 complete genome sequence.</title>
        <authorList>
            <person name="Maze A."/>
            <person name="Boel G."/>
            <person name="Bourand A."/>
            <person name="Loux V."/>
            <person name="Gibrat J.F."/>
            <person name="Zuniga M."/>
            <person name="Hartke A."/>
            <person name="Deutscher J."/>
        </authorList>
    </citation>
    <scope>NUCLEOTIDE SEQUENCE [LARGE SCALE GENOMIC DNA]</scope>
    <source>
        <strain>BL23</strain>
    </source>
</reference>
<comment type="function">
    <text evidence="1">Catalyzes the attachment of L-aspartate to tRNA(Asp) in a two-step reaction: L-aspartate is first activated by ATP to form Asp-AMP and then transferred to the acceptor end of tRNA(Asp).</text>
</comment>
<comment type="catalytic activity">
    <reaction evidence="1">
        <text>tRNA(Asp) + L-aspartate + ATP = L-aspartyl-tRNA(Asp) + AMP + diphosphate</text>
        <dbReference type="Rhea" id="RHEA:19649"/>
        <dbReference type="Rhea" id="RHEA-COMP:9660"/>
        <dbReference type="Rhea" id="RHEA-COMP:9678"/>
        <dbReference type="ChEBI" id="CHEBI:29991"/>
        <dbReference type="ChEBI" id="CHEBI:30616"/>
        <dbReference type="ChEBI" id="CHEBI:33019"/>
        <dbReference type="ChEBI" id="CHEBI:78442"/>
        <dbReference type="ChEBI" id="CHEBI:78516"/>
        <dbReference type="ChEBI" id="CHEBI:456215"/>
        <dbReference type="EC" id="6.1.1.12"/>
    </reaction>
</comment>
<comment type="subunit">
    <text evidence="1">Homodimer.</text>
</comment>
<comment type="subcellular location">
    <subcellularLocation>
        <location evidence="1">Cytoplasm</location>
    </subcellularLocation>
</comment>
<comment type="similarity">
    <text evidence="1">Belongs to the class-II aminoacyl-tRNA synthetase family. Type 1 subfamily.</text>
</comment>